<keyword id="KW-0238">DNA-binding</keyword>
<keyword id="KW-0945">Host-virus interaction</keyword>
<keyword id="KW-1090">Inhibition of host innate immune response by virus</keyword>
<keyword id="KW-0479">Metal-binding</keyword>
<keyword id="KW-0941">Suppressor of RNA silencing</keyword>
<keyword id="KW-0899">Viral immunoevasion</keyword>
<keyword id="KW-0862">Zinc</keyword>
<keyword id="KW-0863">Zinc-finger</keyword>
<sequence>MKDVTKVALLIARAMCTSSGTFVFELAFSIAECAGRPLGGGRSKYARRRRAISIARCHRCYRLWPPTVFTTRCDNKYCVPGISYNVRVAQFIDEGVTEVIPSVINKRE</sequence>
<proteinExistence type="inferred from homology"/>
<organismHost>
    <name type="scientific">Solanum tuberosum</name>
    <name type="common">Potato</name>
    <dbReference type="NCBI Taxonomy" id="4113"/>
</organismHost>
<name>VSR_PVMG</name>
<dbReference type="EMBL" id="X57440">
    <property type="protein sequence ID" value="CAA40689.1"/>
    <property type="molecule type" value="Genomic_RNA"/>
</dbReference>
<dbReference type="PIR" id="S12976">
    <property type="entry name" value="S12976"/>
</dbReference>
<dbReference type="GO" id="GO:0003677">
    <property type="term" value="F:DNA binding"/>
    <property type="evidence" value="ECO:0007669"/>
    <property type="project" value="UniProtKB-KW"/>
</dbReference>
<dbReference type="GO" id="GO:0008270">
    <property type="term" value="F:zinc ion binding"/>
    <property type="evidence" value="ECO:0007669"/>
    <property type="project" value="UniProtKB-KW"/>
</dbReference>
<dbReference type="GO" id="GO:0006355">
    <property type="term" value="P:regulation of DNA-templated transcription"/>
    <property type="evidence" value="ECO:0007669"/>
    <property type="project" value="InterPro"/>
</dbReference>
<dbReference type="GO" id="GO:0052170">
    <property type="term" value="P:symbiont-mediated suppression of host innate immune response"/>
    <property type="evidence" value="ECO:0007669"/>
    <property type="project" value="UniProtKB-KW"/>
</dbReference>
<dbReference type="InterPro" id="IPR002568">
    <property type="entry name" value="Carla-bd"/>
</dbReference>
<dbReference type="Pfam" id="PF01623">
    <property type="entry name" value="Carla_C4"/>
    <property type="match status" value="1"/>
</dbReference>
<evidence type="ECO:0000250" key="1"/>
<evidence type="ECO:0000255" key="2"/>
<evidence type="ECO:0000269" key="3">
    <source>
    </source>
</evidence>
<evidence type="ECO:0000305" key="4"/>
<reference key="1">
    <citation type="journal article" date="1990" name="FEBS Lett.">
        <title>The 12 kDa protein of potato virus M displays properties of a nucleic acid-binding regulatory protein.</title>
        <authorList>
            <person name="Gramstat A."/>
            <person name="Courtpozanis A."/>
            <person name="Rohde W."/>
        </authorList>
    </citation>
    <scope>NUCLEOTIDE SEQUENCE [GENOMIC RNA]</scope>
</reference>
<reference key="2">
    <citation type="journal article" date="2011" name="J. Virol.">
        <title>A dual strategy for the suppression of host antiviral silencing: two distinct suppressors for viral replication and viral movement encoded by potato virus M.</title>
        <authorList>
            <person name="Senshu H."/>
            <person name="Yamaji Y."/>
            <person name="Minato N."/>
            <person name="Shiraishi T."/>
            <person name="Maejima K."/>
            <person name="Hashimoto M."/>
            <person name="Miura C."/>
            <person name="Neriya Y."/>
            <person name="Namba S."/>
        </authorList>
    </citation>
    <scope>FUNCTION</scope>
</reference>
<organism>
    <name type="scientific">Potato virus M (strain German)</name>
    <name type="common">PVM</name>
    <dbReference type="NCBI Taxonomy" id="31710"/>
    <lineage>
        <taxon>Viruses</taxon>
        <taxon>Riboviria</taxon>
        <taxon>Orthornavirae</taxon>
        <taxon>Kitrinoviricota</taxon>
        <taxon>Alsuviricetes</taxon>
        <taxon>Tymovirales</taxon>
        <taxon>Betaflexiviridae</taxon>
        <taxon>Quinvirinae</taxon>
        <taxon>Carlavirus</taxon>
        <taxon>Potato virus M</taxon>
    </lineage>
</organism>
<accession>Q01687</accession>
<comment type="function">
    <text evidence="3">Suppressor of viral-induced RNA silencing. The potential mechanism of action is based on sequestering siRNAs.</text>
</comment>
<comment type="similarity">
    <text evidence="4">Belongs to the carlaviruses nucleic acid-binding protein family.</text>
</comment>
<protein>
    <recommendedName>
        <fullName>RNA silencing suppressor</fullName>
    </recommendedName>
    <alternativeName>
        <fullName>12 kDa protein</fullName>
    </alternativeName>
    <alternativeName>
        <fullName>Cysteine-rich protein</fullName>
        <shortName>CRP</shortName>
    </alternativeName>
    <alternativeName>
        <fullName>Nucleic acid-binding regulatory protein</fullName>
    </alternativeName>
    <alternativeName>
        <fullName>PR12</fullName>
    </alternativeName>
</protein>
<feature type="chain" id="PRO_0000222656" description="RNA silencing suppressor">
    <location>
        <begin position="1"/>
        <end position="108"/>
    </location>
</feature>
<feature type="zinc finger region" description="C4-type" evidence="2">
    <location>
        <begin position="57"/>
        <end position="78"/>
    </location>
</feature>
<feature type="region of interest" description="Basic" evidence="1">
    <location>
        <begin position="47"/>
        <end position="50"/>
    </location>
</feature>